<feature type="chain" id="PRO_1000051065" description="Small ribosomal subunit protein uS19">
    <location>
        <begin position="1"/>
        <end position="95"/>
    </location>
</feature>
<name>RS19_LACGA</name>
<gene>
    <name evidence="1" type="primary">rpsS</name>
    <name type="ordered locus">LGAS_0295</name>
</gene>
<sequence>MSRSIKKGPFADASLLKKIEAQEGSEKKQVIKTWSRRSTIFPSFVGFTIAVYDGRKHVPVYITEDMVGHKLGEFVPTRTFRGHKVADKATTTVGK</sequence>
<protein>
    <recommendedName>
        <fullName evidence="1">Small ribosomal subunit protein uS19</fullName>
    </recommendedName>
    <alternativeName>
        <fullName evidence="2">30S ribosomal protein S19</fullName>
    </alternativeName>
</protein>
<evidence type="ECO:0000255" key="1">
    <source>
        <dbReference type="HAMAP-Rule" id="MF_00531"/>
    </source>
</evidence>
<evidence type="ECO:0000305" key="2"/>
<dbReference type="EMBL" id="CP000413">
    <property type="protein sequence ID" value="ABJ59701.1"/>
    <property type="molecule type" value="Genomic_DNA"/>
</dbReference>
<dbReference type="RefSeq" id="WP_003647831.1">
    <property type="nucleotide sequence ID" value="NZ_WBMG01000001.1"/>
</dbReference>
<dbReference type="SMR" id="Q046C1"/>
<dbReference type="GeneID" id="83569758"/>
<dbReference type="KEGG" id="lga:LGAS_0295"/>
<dbReference type="HOGENOM" id="CLU_144911_0_1_9"/>
<dbReference type="BioCyc" id="LGAS324831:G1G6Y-293-MONOMER"/>
<dbReference type="Proteomes" id="UP000000664">
    <property type="component" value="Chromosome"/>
</dbReference>
<dbReference type="GO" id="GO:0005737">
    <property type="term" value="C:cytoplasm"/>
    <property type="evidence" value="ECO:0007669"/>
    <property type="project" value="UniProtKB-ARBA"/>
</dbReference>
<dbReference type="GO" id="GO:0015935">
    <property type="term" value="C:small ribosomal subunit"/>
    <property type="evidence" value="ECO:0007669"/>
    <property type="project" value="InterPro"/>
</dbReference>
<dbReference type="GO" id="GO:0019843">
    <property type="term" value="F:rRNA binding"/>
    <property type="evidence" value="ECO:0007669"/>
    <property type="project" value="UniProtKB-UniRule"/>
</dbReference>
<dbReference type="GO" id="GO:0003735">
    <property type="term" value="F:structural constituent of ribosome"/>
    <property type="evidence" value="ECO:0007669"/>
    <property type="project" value="InterPro"/>
</dbReference>
<dbReference type="GO" id="GO:0000028">
    <property type="term" value="P:ribosomal small subunit assembly"/>
    <property type="evidence" value="ECO:0007669"/>
    <property type="project" value="TreeGrafter"/>
</dbReference>
<dbReference type="GO" id="GO:0006412">
    <property type="term" value="P:translation"/>
    <property type="evidence" value="ECO:0007669"/>
    <property type="project" value="UniProtKB-UniRule"/>
</dbReference>
<dbReference type="FunFam" id="3.30.860.10:FF:000001">
    <property type="entry name" value="30S ribosomal protein S19"/>
    <property type="match status" value="1"/>
</dbReference>
<dbReference type="Gene3D" id="3.30.860.10">
    <property type="entry name" value="30s Ribosomal Protein S19, Chain A"/>
    <property type="match status" value="1"/>
</dbReference>
<dbReference type="HAMAP" id="MF_00531">
    <property type="entry name" value="Ribosomal_uS19"/>
    <property type="match status" value="1"/>
</dbReference>
<dbReference type="InterPro" id="IPR002222">
    <property type="entry name" value="Ribosomal_uS19"/>
</dbReference>
<dbReference type="InterPro" id="IPR005732">
    <property type="entry name" value="Ribosomal_uS19_bac-type"/>
</dbReference>
<dbReference type="InterPro" id="IPR020934">
    <property type="entry name" value="Ribosomal_uS19_CS"/>
</dbReference>
<dbReference type="InterPro" id="IPR023575">
    <property type="entry name" value="Ribosomal_uS19_SF"/>
</dbReference>
<dbReference type="NCBIfam" id="TIGR01050">
    <property type="entry name" value="rpsS_bact"/>
    <property type="match status" value="1"/>
</dbReference>
<dbReference type="PANTHER" id="PTHR11880">
    <property type="entry name" value="RIBOSOMAL PROTEIN S19P FAMILY MEMBER"/>
    <property type="match status" value="1"/>
</dbReference>
<dbReference type="PANTHER" id="PTHR11880:SF8">
    <property type="entry name" value="SMALL RIBOSOMAL SUBUNIT PROTEIN US19M"/>
    <property type="match status" value="1"/>
</dbReference>
<dbReference type="Pfam" id="PF00203">
    <property type="entry name" value="Ribosomal_S19"/>
    <property type="match status" value="1"/>
</dbReference>
<dbReference type="PIRSF" id="PIRSF002144">
    <property type="entry name" value="Ribosomal_S19"/>
    <property type="match status" value="1"/>
</dbReference>
<dbReference type="PRINTS" id="PR00975">
    <property type="entry name" value="RIBOSOMALS19"/>
</dbReference>
<dbReference type="SUPFAM" id="SSF54570">
    <property type="entry name" value="Ribosomal protein S19"/>
    <property type="match status" value="1"/>
</dbReference>
<dbReference type="PROSITE" id="PS00323">
    <property type="entry name" value="RIBOSOMAL_S19"/>
    <property type="match status" value="1"/>
</dbReference>
<reference key="1">
    <citation type="journal article" date="2006" name="Proc. Natl. Acad. Sci. U.S.A.">
        <title>Comparative genomics of the lactic acid bacteria.</title>
        <authorList>
            <person name="Makarova K.S."/>
            <person name="Slesarev A."/>
            <person name="Wolf Y.I."/>
            <person name="Sorokin A."/>
            <person name="Mirkin B."/>
            <person name="Koonin E.V."/>
            <person name="Pavlov A."/>
            <person name="Pavlova N."/>
            <person name="Karamychev V."/>
            <person name="Polouchine N."/>
            <person name="Shakhova V."/>
            <person name="Grigoriev I."/>
            <person name="Lou Y."/>
            <person name="Rohksar D."/>
            <person name="Lucas S."/>
            <person name="Huang K."/>
            <person name="Goodstein D.M."/>
            <person name="Hawkins T."/>
            <person name="Plengvidhya V."/>
            <person name="Welker D."/>
            <person name="Hughes J."/>
            <person name="Goh Y."/>
            <person name="Benson A."/>
            <person name="Baldwin K."/>
            <person name="Lee J.-H."/>
            <person name="Diaz-Muniz I."/>
            <person name="Dosti B."/>
            <person name="Smeianov V."/>
            <person name="Wechter W."/>
            <person name="Barabote R."/>
            <person name="Lorca G."/>
            <person name="Altermann E."/>
            <person name="Barrangou R."/>
            <person name="Ganesan B."/>
            <person name="Xie Y."/>
            <person name="Rawsthorne H."/>
            <person name="Tamir D."/>
            <person name="Parker C."/>
            <person name="Breidt F."/>
            <person name="Broadbent J.R."/>
            <person name="Hutkins R."/>
            <person name="O'Sullivan D."/>
            <person name="Steele J."/>
            <person name="Unlu G."/>
            <person name="Saier M.H. Jr."/>
            <person name="Klaenhammer T."/>
            <person name="Richardson P."/>
            <person name="Kozyavkin S."/>
            <person name="Weimer B.C."/>
            <person name="Mills D.A."/>
        </authorList>
    </citation>
    <scope>NUCLEOTIDE SEQUENCE [LARGE SCALE GENOMIC DNA]</scope>
    <source>
        <strain>ATCC 33323 / DSM 20243 / BCRC 14619 / CIP 102991 / JCM 1131 / KCTC 3163 / NCIMB 11718 / NCTC 13722 / AM63</strain>
    </source>
</reference>
<proteinExistence type="inferred from homology"/>
<organism>
    <name type="scientific">Lactobacillus gasseri (strain ATCC 33323 / DSM 20243 / BCRC 14619 / CIP 102991 / JCM 1131 / KCTC 3163 / NCIMB 11718 / NCTC 13722 / AM63)</name>
    <dbReference type="NCBI Taxonomy" id="324831"/>
    <lineage>
        <taxon>Bacteria</taxon>
        <taxon>Bacillati</taxon>
        <taxon>Bacillota</taxon>
        <taxon>Bacilli</taxon>
        <taxon>Lactobacillales</taxon>
        <taxon>Lactobacillaceae</taxon>
        <taxon>Lactobacillus</taxon>
    </lineage>
</organism>
<accession>Q046C1</accession>
<keyword id="KW-0687">Ribonucleoprotein</keyword>
<keyword id="KW-0689">Ribosomal protein</keyword>
<keyword id="KW-0694">RNA-binding</keyword>
<keyword id="KW-0699">rRNA-binding</keyword>
<comment type="function">
    <text evidence="1">Protein S19 forms a complex with S13 that binds strongly to the 16S ribosomal RNA.</text>
</comment>
<comment type="similarity">
    <text evidence="1">Belongs to the universal ribosomal protein uS19 family.</text>
</comment>